<accession>Q2SYT0</accession>
<evidence type="ECO:0000255" key="1">
    <source>
        <dbReference type="HAMAP-Rule" id="MF_00671"/>
    </source>
</evidence>
<evidence type="ECO:0000305" key="2"/>
<comment type="function">
    <text evidence="1">Part of the Tol-Pal system, which plays a role in outer membrane invagination during cell division and is important for maintaining outer membrane integrity.</text>
</comment>
<comment type="subunit">
    <text evidence="1">The Tol-Pal system is composed of five core proteins: the inner membrane proteins TolA, TolQ and TolR, the periplasmic protein TolB and the outer membrane protein Pal. They form a network linking the inner and outer membranes and the peptidoglycan layer.</text>
</comment>
<comment type="subcellular location">
    <subcellularLocation>
        <location evidence="1">Periplasm</location>
    </subcellularLocation>
</comment>
<comment type="similarity">
    <text evidence="1">Belongs to the TolB family.</text>
</comment>
<comment type="sequence caution" evidence="2">
    <conflict type="erroneous initiation">
        <sequence resource="EMBL-CDS" id="ABC38733"/>
    </conflict>
</comment>
<keyword id="KW-0131">Cell cycle</keyword>
<keyword id="KW-0132">Cell division</keyword>
<keyword id="KW-0574">Periplasm</keyword>
<keyword id="KW-0732">Signal</keyword>
<sequence length="433" mass="45801">MSLMTKLGFRALVASCLIAAGGAAHAQVNVLITGVGSTQFPIATANFVNEASLPQQVTSIVRADLARSGKFTNVDAGGTPVPETASVDFGAWKAKGANAFVAGSVSREPNGQYKVNFILYDTVKQQSLGGLSLTTSNDNEGMRKTGHKIADYIYQKLLGVRGVFNTRLSYVQRTGNVYKLLISDSDGQNAIPALTSKEPIISPAWSPSGTKVAYVSFELRKPVVYIHDLPTGRRYVISNQKGNNSAPAWSPDGQTLAVALSLTGNTQIYSVSSTGSGLHRLTRSSSIDTEPFYSPDGKWIYFTSDRGGAPQIYRMPAGGESAGAAQRVTFTGSYNTSPRISPDGKLLAYISRTGGGFKLYVQDLQTGAANAVTNTTRDESPSFAANGQYILYATQSGGRSVLAAVPSDGSAPPQILSVQGGAIREPSWGPFMQ</sequence>
<dbReference type="EMBL" id="CP000086">
    <property type="protein sequence ID" value="ABC38733.1"/>
    <property type="status" value="ALT_INIT"/>
    <property type="molecule type" value="Genomic_DNA"/>
</dbReference>
<dbReference type="RefSeq" id="WP_009889374.1">
    <property type="nucleotide sequence ID" value="NZ_CP008785.1"/>
</dbReference>
<dbReference type="SMR" id="Q2SYT0"/>
<dbReference type="GeneID" id="45121116"/>
<dbReference type="KEGG" id="bte:BTH_I1373"/>
<dbReference type="HOGENOM" id="CLU_047123_0_0_4"/>
<dbReference type="Proteomes" id="UP000001930">
    <property type="component" value="Chromosome I"/>
</dbReference>
<dbReference type="GO" id="GO:0042597">
    <property type="term" value="C:periplasmic space"/>
    <property type="evidence" value="ECO:0007669"/>
    <property type="project" value="UniProtKB-SubCell"/>
</dbReference>
<dbReference type="GO" id="GO:0051301">
    <property type="term" value="P:cell division"/>
    <property type="evidence" value="ECO:0007669"/>
    <property type="project" value="UniProtKB-UniRule"/>
</dbReference>
<dbReference type="GO" id="GO:0017038">
    <property type="term" value="P:protein import"/>
    <property type="evidence" value="ECO:0007669"/>
    <property type="project" value="InterPro"/>
</dbReference>
<dbReference type="Gene3D" id="2.120.10.30">
    <property type="entry name" value="TolB, C-terminal domain"/>
    <property type="match status" value="1"/>
</dbReference>
<dbReference type="Gene3D" id="3.40.50.10070">
    <property type="entry name" value="TolB, N-terminal domain"/>
    <property type="match status" value="1"/>
</dbReference>
<dbReference type="HAMAP" id="MF_00671">
    <property type="entry name" value="TolB"/>
    <property type="match status" value="1"/>
</dbReference>
<dbReference type="InterPro" id="IPR011042">
    <property type="entry name" value="6-blade_b-propeller_TolB-like"/>
</dbReference>
<dbReference type="InterPro" id="IPR011659">
    <property type="entry name" value="PD40"/>
</dbReference>
<dbReference type="InterPro" id="IPR014167">
    <property type="entry name" value="Tol-Pal_TolB"/>
</dbReference>
<dbReference type="InterPro" id="IPR007195">
    <property type="entry name" value="TolB_N"/>
</dbReference>
<dbReference type="NCBIfam" id="TIGR02800">
    <property type="entry name" value="propeller_TolB"/>
    <property type="match status" value="1"/>
</dbReference>
<dbReference type="PANTHER" id="PTHR36842:SF1">
    <property type="entry name" value="PROTEIN TOLB"/>
    <property type="match status" value="1"/>
</dbReference>
<dbReference type="PANTHER" id="PTHR36842">
    <property type="entry name" value="PROTEIN TOLB HOMOLOG"/>
    <property type="match status" value="1"/>
</dbReference>
<dbReference type="Pfam" id="PF07676">
    <property type="entry name" value="PD40"/>
    <property type="match status" value="5"/>
</dbReference>
<dbReference type="Pfam" id="PF04052">
    <property type="entry name" value="TolB_N"/>
    <property type="match status" value="1"/>
</dbReference>
<dbReference type="SUPFAM" id="SSF52964">
    <property type="entry name" value="TolB, N-terminal domain"/>
    <property type="match status" value="1"/>
</dbReference>
<dbReference type="SUPFAM" id="SSF69304">
    <property type="entry name" value="Tricorn protease N-terminal domain"/>
    <property type="match status" value="1"/>
</dbReference>
<name>TOLB_BURTA</name>
<organism>
    <name type="scientific">Burkholderia thailandensis (strain ATCC 700388 / DSM 13276 / CCUG 48851 / CIP 106301 / E264)</name>
    <dbReference type="NCBI Taxonomy" id="271848"/>
    <lineage>
        <taxon>Bacteria</taxon>
        <taxon>Pseudomonadati</taxon>
        <taxon>Pseudomonadota</taxon>
        <taxon>Betaproteobacteria</taxon>
        <taxon>Burkholderiales</taxon>
        <taxon>Burkholderiaceae</taxon>
        <taxon>Burkholderia</taxon>
        <taxon>pseudomallei group</taxon>
    </lineage>
</organism>
<gene>
    <name evidence="1" type="primary">tolB</name>
    <name type="ordered locus">BTH_I1373</name>
</gene>
<reference key="1">
    <citation type="journal article" date="2005" name="BMC Genomics">
        <title>Bacterial genome adaptation to niches: divergence of the potential virulence genes in three Burkholderia species of different survival strategies.</title>
        <authorList>
            <person name="Kim H.S."/>
            <person name="Schell M.A."/>
            <person name="Yu Y."/>
            <person name="Ulrich R.L."/>
            <person name="Sarria S.H."/>
            <person name="Nierman W.C."/>
            <person name="DeShazer D."/>
        </authorList>
    </citation>
    <scope>NUCLEOTIDE SEQUENCE [LARGE SCALE GENOMIC DNA]</scope>
    <source>
        <strain>ATCC 700388 / DSM 13276 / CCUG 48851 / CIP 106301 / E264</strain>
    </source>
</reference>
<feature type="signal peptide" evidence="1">
    <location>
        <begin position="1"/>
        <end position="26"/>
    </location>
</feature>
<feature type="chain" id="PRO_0000259037" description="Tol-Pal system protein TolB" evidence="1">
    <location>
        <begin position="27"/>
        <end position="433"/>
    </location>
</feature>
<proteinExistence type="inferred from homology"/>
<protein>
    <recommendedName>
        <fullName evidence="1">Tol-Pal system protein TolB</fullName>
    </recommendedName>
</protein>